<evidence type="ECO:0000250" key="1"/>
<evidence type="ECO:0000255" key="2">
    <source>
        <dbReference type="PROSITE-ProRule" id="PRU00335"/>
    </source>
</evidence>
<dbReference type="EMBL" id="AF086783">
    <property type="protein sequence ID" value="AAD52054.1"/>
    <property type="molecule type" value="Genomic_DNA"/>
</dbReference>
<dbReference type="EMBL" id="CP000253">
    <property type="protein sequence ID" value="ABD31988.1"/>
    <property type="molecule type" value="Genomic_DNA"/>
</dbReference>
<dbReference type="PIR" id="A99975">
    <property type="entry name" value="A99975"/>
</dbReference>
<dbReference type="RefSeq" id="WP_000653261.1">
    <property type="nucleotide sequence ID" value="NZ_LS483365.1"/>
</dbReference>
<dbReference type="RefSeq" id="YP_501450.1">
    <property type="nucleotide sequence ID" value="NC_007795.1"/>
</dbReference>
<dbReference type="SMR" id="Q9RQQ0"/>
<dbReference type="STRING" id="93061.SAOUHSC_03001"/>
<dbReference type="PaxDb" id="1280-SAXN108_2938"/>
<dbReference type="GeneID" id="3921483"/>
<dbReference type="KEGG" id="sao:SAOUHSC_03001"/>
<dbReference type="PATRIC" id="fig|93061.5.peg.2708"/>
<dbReference type="eggNOG" id="COG1309">
    <property type="taxonomic scope" value="Bacteria"/>
</dbReference>
<dbReference type="HOGENOM" id="CLU_124987_0_0_9"/>
<dbReference type="OrthoDB" id="509229at2"/>
<dbReference type="PRO" id="PR:Q9RQQ0"/>
<dbReference type="Proteomes" id="UP000008816">
    <property type="component" value="Chromosome"/>
</dbReference>
<dbReference type="GO" id="GO:0003700">
    <property type="term" value="F:DNA-binding transcription factor activity"/>
    <property type="evidence" value="ECO:0000318"/>
    <property type="project" value="GO_Central"/>
</dbReference>
<dbReference type="GO" id="GO:0000976">
    <property type="term" value="F:transcription cis-regulatory region binding"/>
    <property type="evidence" value="ECO:0000318"/>
    <property type="project" value="GO_Central"/>
</dbReference>
<dbReference type="GO" id="GO:0006355">
    <property type="term" value="P:regulation of DNA-templated transcription"/>
    <property type="evidence" value="ECO:0000318"/>
    <property type="project" value="GO_Central"/>
</dbReference>
<dbReference type="Gene3D" id="1.10.357.10">
    <property type="entry name" value="Tetracycline Repressor, domain 2"/>
    <property type="match status" value="1"/>
</dbReference>
<dbReference type="InterPro" id="IPR009057">
    <property type="entry name" value="Homeodomain-like_sf"/>
</dbReference>
<dbReference type="InterPro" id="IPR050624">
    <property type="entry name" value="HTH-type_Tx_Regulator"/>
</dbReference>
<dbReference type="InterPro" id="IPR001647">
    <property type="entry name" value="HTH_TetR"/>
</dbReference>
<dbReference type="InterPro" id="IPR041646">
    <property type="entry name" value="IcaR_C"/>
</dbReference>
<dbReference type="PANTHER" id="PTHR43479">
    <property type="entry name" value="ACREF/ENVCD OPERON REPRESSOR-RELATED"/>
    <property type="match status" value="1"/>
</dbReference>
<dbReference type="PANTHER" id="PTHR43479:SF11">
    <property type="entry name" value="ACREF_ENVCD OPERON REPRESSOR-RELATED"/>
    <property type="match status" value="1"/>
</dbReference>
<dbReference type="Pfam" id="PF18665">
    <property type="entry name" value="TetR_C_37"/>
    <property type="match status" value="1"/>
</dbReference>
<dbReference type="Pfam" id="PF00440">
    <property type="entry name" value="TetR_N"/>
    <property type="match status" value="1"/>
</dbReference>
<dbReference type="PRINTS" id="PR00455">
    <property type="entry name" value="HTHTETR"/>
</dbReference>
<dbReference type="SUPFAM" id="SSF46689">
    <property type="entry name" value="Homeodomain-like"/>
    <property type="match status" value="1"/>
</dbReference>
<dbReference type="PROSITE" id="PS50977">
    <property type="entry name" value="HTH_TETR_2"/>
    <property type="match status" value="1"/>
</dbReference>
<keyword id="KW-0238">DNA-binding</keyword>
<keyword id="KW-1185">Reference proteome</keyword>
<keyword id="KW-0678">Repressor</keyword>
<keyword id="KW-0804">Transcription</keyword>
<keyword id="KW-0805">Transcription regulation</keyword>
<protein>
    <recommendedName>
        <fullName>Biofilm operon icaADBC HTH-type negative transcriptional regulator IcaR</fullName>
    </recommendedName>
    <alternativeName>
        <fullName>Intercellular adhesion protein R</fullName>
    </alternativeName>
</protein>
<reference key="1">
    <citation type="journal article" date="1999" name="Infect. Immun.">
        <title>The intercellular adhesion (ica) locus is present in Staphylococcus aureus and is required for biofilm formation.</title>
        <authorList>
            <person name="Cramton S.E."/>
            <person name="Gerke C."/>
            <person name="Schnell N.F."/>
            <person name="Nichols W.W."/>
            <person name="Goetz F."/>
        </authorList>
    </citation>
    <scope>NUCLEOTIDE SEQUENCE [GENOMIC DNA]</scope>
</reference>
<reference key="2">
    <citation type="book" date="2006" name="Gram positive pathogens, 2nd edition">
        <title>The Staphylococcus aureus NCTC 8325 genome.</title>
        <editorList>
            <person name="Fischetti V."/>
            <person name="Novick R."/>
            <person name="Ferretti J."/>
            <person name="Portnoy D."/>
            <person name="Rood J."/>
        </editorList>
        <authorList>
            <person name="Gillaspy A.F."/>
            <person name="Worrell V."/>
            <person name="Orvis J."/>
            <person name="Roe B.A."/>
            <person name="Dyer D.W."/>
            <person name="Iandolo J.J."/>
        </authorList>
    </citation>
    <scope>NUCLEOTIDE SEQUENCE [LARGE SCALE GENOMIC DNA]</scope>
    <source>
        <strain>NCTC 8325 / PS 47</strain>
    </source>
</reference>
<sequence length="186" mass="21987">MKDKIIDNAITLFSEKGYDGTTLDDIAKSVNIKKASLYYHFDSKKSIYEQSVKCCFDYLNNIIMMNQNKSNYSIDALYQFLFEFIFDIEERYIRMYVQLSNTPEEFSGNIYGQIQDLNQSLSKEIAKFYDESKIKMTKEDFQNLILLFLESWYLKASFSQKFGAVEESKSQFKDEVYSLLNIFLKK</sequence>
<feature type="chain" id="PRO_0000070596" description="Biofilm operon icaADBC HTH-type negative transcriptional regulator IcaR">
    <location>
        <begin position="1"/>
        <end position="186"/>
    </location>
</feature>
<feature type="domain" description="HTH tetR-type" evidence="2">
    <location>
        <begin position="1"/>
        <end position="59"/>
    </location>
</feature>
<feature type="DNA-binding region" description="H-T-H motif" evidence="2">
    <location>
        <begin position="22"/>
        <end position="41"/>
    </location>
</feature>
<name>ICAR_STAA8</name>
<proteinExistence type="inferred from homology"/>
<gene>
    <name type="primary">icaR</name>
    <name type="ordered locus">SAOUHSC_03001</name>
</gene>
<comment type="function">
    <text evidence="1">Represses transcription of the icaADBC operon necessary for biofilm production.</text>
</comment>
<comment type="subunit">
    <text evidence="1">Homodimer.</text>
</comment>
<comment type="miscellaneous">
    <text evidence="1">Binding to the ica operator DNA involves two IcaR dimers and is highly cooperative.</text>
</comment>
<accession>Q9RQQ0</accession>
<accession>Q2FUV0</accession>
<organism>
    <name type="scientific">Staphylococcus aureus (strain NCTC 8325 / PS 47)</name>
    <dbReference type="NCBI Taxonomy" id="93061"/>
    <lineage>
        <taxon>Bacteria</taxon>
        <taxon>Bacillati</taxon>
        <taxon>Bacillota</taxon>
        <taxon>Bacilli</taxon>
        <taxon>Bacillales</taxon>
        <taxon>Staphylococcaceae</taxon>
        <taxon>Staphylococcus</taxon>
    </lineage>
</organism>